<organism>
    <name type="scientific">Pyrobaculum islandicum (strain DSM 4184 / JCM 9189 / GEO3)</name>
    <dbReference type="NCBI Taxonomy" id="384616"/>
    <lineage>
        <taxon>Archaea</taxon>
        <taxon>Thermoproteota</taxon>
        <taxon>Thermoprotei</taxon>
        <taxon>Thermoproteales</taxon>
        <taxon>Thermoproteaceae</taxon>
        <taxon>Pyrobaculum</taxon>
    </lineage>
</organism>
<name>UPPP_PYRIL</name>
<comment type="function">
    <text evidence="1">Catalyzes the dephosphorylation of undecaprenyl diphosphate (UPP).</text>
</comment>
<comment type="catalytic activity">
    <reaction evidence="1">
        <text>di-trans,octa-cis-undecaprenyl diphosphate + H2O = di-trans,octa-cis-undecaprenyl phosphate + phosphate + H(+)</text>
        <dbReference type="Rhea" id="RHEA:28094"/>
        <dbReference type="ChEBI" id="CHEBI:15377"/>
        <dbReference type="ChEBI" id="CHEBI:15378"/>
        <dbReference type="ChEBI" id="CHEBI:43474"/>
        <dbReference type="ChEBI" id="CHEBI:58405"/>
        <dbReference type="ChEBI" id="CHEBI:60392"/>
        <dbReference type="EC" id="3.6.1.27"/>
    </reaction>
</comment>
<comment type="subcellular location">
    <subcellularLocation>
        <location evidence="1">Cell membrane</location>
        <topology evidence="1">Multi-pass membrane protein</topology>
    </subcellularLocation>
</comment>
<comment type="similarity">
    <text evidence="1">Belongs to the UppP family.</text>
</comment>
<reference key="1">
    <citation type="submission" date="2006-12" db="EMBL/GenBank/DDBJ databases">
        <title>Complete sequence of Pyrobaculum islandicum DSM 4184.</title>
        <authorList>
            <person name="Copeland A."/>
            <person name="Lucas S."/>
            <person name="Lapidus A."/>
            <person name="Barry K."/>
            <person name="Detter J.C."/>
            <person name="Glavina del Rio T."/>
            <person name="Dalin E."/>
            <person name="Tice H."/>
            <person name="Pitluck S."/>
            <person name="Meincke L."/>
            <person name="Brettin T."/>
            <person name="Bruce D."/>
            <person name="Han C."/>
            <person name="Tapia R."/>
            <person name="Gilna P."/>
            <person name="Schmutz J."/>
            <person name="Larimer F."/>
            <person name="Land M."/>
            <person name="Hauser L."/>
            <person name="Kyrpides N."/>
            <person name="Mikhailova N."/>
            <person name="Cozen A.E."/>
            <person name="Fitz-Gibbon S.T."/>
            <person name="House C.H."/>
            <person name="Saltikov C."/>
            <person name="Lowe T."/>
            <person name="Richardson P."/>
        </authorList>
    </citation>
    <scope>NUCLEOTIDE SEQUENCE [LARGE SCALE GENOMIC DNA]</scope>
    <source>
        <strain>DSM 4184 / JCM 9189 / GEO3</strain>
    </source>
</reference>
<gene>
    <name evidence="1" type="primary">uppP</name>
    <name type="ordered locus">Pisl_0122</name>
</gene>
<protein>
    <recommendedName>
        <fullName evidence="1">Undecaprenyl-diphosphatase</fullName>
        <ecNumber evidence="1">3.6.1.27</ecNumber>
    </recommendedName>
    <alternativeName>
        <fullName evidence="1">Undecaprenyl pyrophosphate phosphatase</fullName>
    </alternativeName>
</protein>
<evidence type="ECO:0000255" key="1">
    <source>
        <dbReference type="HAMAP-Rule" id="MF_01006"/>
    </source>
</evidence>
<sequence>MDFLTAIVLGVVQGVSEWLPISSKTQVMFVSQLLLSATPELAYSLGLFLEAASVLAALIYFRLVYLKILRGFLGDAEGRKWLTYVIVTTAATGAVGIPLYMAAKRYLLLGASAGWLMVVLGVAVIFNAVLLQRARSVAGLKTFDDMTLGHMALVGLAQALSVLPGISRSGITTTTLLLLGYRPDEAFKSSFVLVPIAGLGATALAYLSEGGAVATPEVITAMLIGLVVSLVTIKALLEFAKSKHVTLVNIVVGTLAIAGGITRILLSS</sequence>
<feature type="chain" id="PRO_0000290785" description="Undecaprenyl-diphosphatase">
    <location>
        <begin position="1"/>
        <end position="268"/>
    </location>
</feature>
<feature type="transmembrane region" description="Helical" evidence="1">
    <location>
        <begin position="41"/>
        <end position="61"/>
    </location>
</feature>
<feature type="transmembrane region" description="Helical" evidence="1">
    <location>
        <begin position="81"/>
        <end position="101"/>
    </location>
</feature>
<feature type="transmembrane region" description="Helical" evidence="1">
    <location>
        <begin position="106"/>
        <end position="126"/>
    </location>
</feature>
<feature type="transmembrane region" description="Helical" evidence="1">
    <location>
        <begin position="146"/>
        <end position="166"/>
    </location>
</feature>
<feature type="transmembrane region" description="Helical" evidence="1">
    <location>
        <begin position="191"/>
        <end position="211"/>
    </location>
</feature>
<feature type="transmembrane region" description="Helical" evidence="1">
    <location>
        <begin position="213"/>
        <end position="233"/>
    </location>
</feature>
<feature type="transmembrane region" description="Helical" evidence="1">
    <location>
        <begin position="245"/>
        <end position="265"/>
    </location>
</feature>
<dbReference type="EC" id="3.6.1.27" evidence="1"/>
<dbReference type="EMBL" id="CP000504">
    <property type="protein sequence ID" value="ABL87305.1"/>
    <property type="molecule type" value="Genomic_DNA"/>
</dbReference>
<dbReference type="RefSeq" id="WP_011761882.1">
    <property type="nucleotide sequence ID" value="NC_008701.1"/>
</dbReference>
<dbReference type="SMR" id="A1RQS3"/>
<dbReference type="STRING" id="384616.Pisl_0122"/>
<dbReference type="GeneID" id="4616316"/>
<dbReference type="KEGG" id="pis:Pisl_0122"/>
<dbReference type="eggNOG" id="arCOG04761">
    <property type="taxonomic scope" value="Archaea"/>
</dbReference>
<dbReference type="HOGENOM" id="CLU_060296_1_2_2"/>
<dbReference type="OrthoDB" id="65864at2157"/>
<dbReference type="Proteomes" id="UP000002595">
    <property type="component" value="Chromosome"/>
</dbReference>
<dbReference type="GO" id="GO:0005886">
    <property type="term" value="C:plasma membrane"/>
    <property type="evidence" value="ECO:0007669"/>
    <property type="project" value="UniProtKB-SubCell"/>
</dbReference>
<dbReference type="GO" id="GO:0050380">
    <property type="term" value="F:undecaprenyl-diphosphatase activity"/>
    <property type="evidence" value="ECO:0007669"/>
    <property type="project" value="UniProtKB-UniRule"/>
</dbReference>
<dbReference type="HAMAP" id="MF_01006">
    <property type="entry name" value="Undec_diphosphatase"/>
    <property type="match status" value="1"/>
</dbReference>
<dbReference type="InterPro" id="IPR003824">
    <property type="entry name" value="UppP"/>
</dbReference>
<dbReference type="PANTHER" id="PTHR30622">
    <property type="entry name" value="UNDECAPRENYL-DIPHOSPHATASE"/>
    <property type="match status" value="1"/>
</dbReference>
<dbReference type="PANTHER" id="PTHR30622:SF2">
    <property type="entry name" value="UNDECAPRENYL-DIPHOSPHATASE"/>
    <property type="match status" value="1"/>
</dbReference>
<dbReference type="Pfam" id="PF02673">
    <property type="entry name" value="BacA"/>
    <property type="match status" value="1"/>
</dbReference>
<accession>A1RQS3</accession>
<keyword id="KW-1003">Cell membrane</keyword>
<keyword id="KW-0378">Hydrolase</keyword>
<keyword id="KW-0472">Membrane</keyword>
<keyword id="KW-0812">Transmembrane</keyword>
<keyword id="KW-1133">Transmembrane helix</keyword>
<proteinExistence type="inferred from homology"/>